<proteinExistence type="inferred from homology"/>
<name>KTHY_LEPIN</name>
<evidence type="ECO:0000255" key="1">
    <source>
        <dbReference type="HAMAP-Rule" id="MF_00165"/>
    </source>
</evidence>
<gene>
    <name evidence="1" type="primary">tmk</name>
    <name type="ordered locus">LA_0806</name>
</gene>
<dbReference type="EC" id="2.7.4.9" evidence="1"/>
<dbReference type="EMBL" id="AE010300">
    <property type="protein sequence ID" value="AAN48005.2"/>
    <property type="molecule type" value="Genomic_DNA"/>
</dbReference>
<dbReference type="RefSeq" id="NP_710987.2">
    <property type="nucleotide sequence ID" value="NC_004342.2"/>
</dbReference>
<dbReference type="RefSeq" id="WP_000791380.1">
    <property type="nucleotide sequence ID" value="NC_004342.2"/>
</dbReference>
<dbReference type="SMR" id="Q8F7Y6"/>
<dbReference type="FunCoup" id="Q8F7Y6">
    <property type="interactions" value="447"/>
</dbReference>
<dbReference type="STRING" id="189518.LA_0806"/>
<dbReference type="PaxDb" id="189518-LA_0806"/>
<dbReference type="EnsemblBacteria" id="AAN48005">
    <property type="protein sequence ID" value="AAN48005"/>
    <property type="gene ID" value="LA_0806"/>
</dbReference>
<dbReference type="GeneID" id="61142689"/>
<dbReference type="KEGG" id="lil:LA_0806"/>
<dbReference type="PATRIC" id="fig|189518.3.peg.812"/>
<dbReference type="HOGENOM" id="CLU_049131_0_2_12"/>
<dbReference type="InParanoid" id="Q8F7Y6"/>
<dbReference type="OrthoDB" id="9774907at2"/>
<dbReference type="Proteomes" id="UP000001408">
    <property type="component" value="Chromosome I"/>
</dbReference>
<dbReference type="GO" id="GO:0005737">
    <property type="term" value="C:cytoplasm"/>
    <property type="evidence" value="ECO:0000318"/>
    <property type="project" value="GO_Central"/>
</dbReference>
<dbReference type="GO" id="GO:0005829">
    <property type="term" value="C:cytosol"/>
    <property type="evidence" value="ECO:0000318"/>
    <property type="project" value="GO_Central"/>
</dbReference>
<dbReference type="GO" id="GO:0005524">
    <property type="term" value="F:ATP binding"/>
    <property type="evidence" value="ECO:0007669"/>
    <property type="project" value="UniProtKB-UniRule"/>
</dbReference>
<dbReference type="GO" id="GO:0004798">
    <property type="term" value="F:dTMP kinase activity"/>
    <property type="evidence" value="ECO:0000318"/>
    <property type="project" value="GO_Central"/>
</dbReference>
<dbReference type="GO" id="GO:0006233">
    <property type="term" value="P:dTDP biosynthetic process"/>
    <property type="evidence" value="ECO:0000318"/>
    <property type="project" value="GO_Central"/>
</dbReference>
<dbReference type="GO" id="GO:0006235">
    <property type="term" value="P:dTTP biosynthetic process"/>
    <property type="evidence" value="ECO:0000318"/>
    <property type="project" value="GO_Central"/>
</dbReference>
<dbReference type="GO" id="GO:0006227">
    <property type="term" value="P:dUDP biosynthetic process"/>
    <property type="evidence" value="ECO:0000318"/>
    <property type="project" value="GO_Central"/>
</dbReference>
<dbReference type="CDD" id="cd01672">
    <property type="entry name" value="TMPK"/>
    <property type="match status" value="1"/>
</dbReference>
<dbReference type="Gene3D" id="3.40.50.300">
    <property type="entry name" value="P-loop containing nucleotide triphosphate hydrolases"/>
    <property type="match status" value="1"/>
</dbReference>
<dbReference type="HAMAP" id="MF_00165">
    <property type="entry name" value="Thymidylate_kinase"/>
    <property type="match status" value="1"/>
</dbReference>
<dbReference type="InterPro" id="IPR027417">
    <property type="entry name" value="P-loop_NTPase"/>
</dbReference>
<dbReference type="InterPro" id="IPR039430">
    <property type="entry name" value="Thymidylate_kin-like_dom"/>
</dbReference>
<dbReference type="InterPro" id="IPR018095">
    <property type="entry name" value="Thymidylate_kin_CS"/>
</dbReference>
<dbReference type="InterPro" id="IPR018094">
    <property type="entry name" value="Thymidylate_kinase"/>
</dbReference>
<dbReference type="NCBIfam" id="TIGR00041">
    <property type="entry name" value="DTMP_kinase"/>
    <property type="match status" value="1"/>
</dbReference>
<dbReference type="PANTHER" id="PTHR10344">
    <property type="entry name" value="THYMIDYLATE KINASE"/>
    <property type="match status" value="1"/>
</dbReference>
<dbReference type="PANTHER" id="PTHR10344:SF4">
    <property type="entry name" value="UMP-CMP KINASE 2, MITOCHONDRIAL"/>
    <property type="match status" value="1"/>
</dbReference>
<dbReference type="Pfam" id="PF02223">
    <property type="entry name" value="Thymidylate_kin"/>
    <property type="match status" value="1"/>
</dbReference>
<dbReference type="SUPFAM" id="SSF52540">
    <property type="entry name" value="P-loop containing nucleoside triphosphate hydrolases"/>
    <property type="match status" value="1"/>
</dbReference>
<dbReference type="PROSITE" id="PS01331">
    <property type="entry name" value="THYMIDYLATE_KINASE"/>
    <property type="match status" value="1"/>
</dbReference>
<reference key="1">
    <citation type="journal article" date="2003" name="Nature">
        <title>Unique physiological and pathogenic features of Leptospira interrogans revealed by whole-genome sequencing.</title>
        <authorList>
            <person name="Ren S.-X."/>
            <person name="Fu G."/>
            <person name="Jiang X.-G."/>
            <person name="Zeng R."/>
            <person name="Miao Y.-G."/>
            <person name="Xu H."/>
            <person name="Zhang Y.-X."/>
            <person name="Xiong H."/>
            <person name="Lu G."/>
            <person name="Lu L.-F."/>
            <person name="Jiang H.-Q."/>
            <person name="Jia J."/>
            <person name="Tu Y.-F."/>
            <person name="Jiang J.-X."/>
            <person name="Gu W.-Y."/>
            <person name="Zhang Y.-Q."/>
            <person name="Cai Z."/>
            <person name="Sheng H.-H."/>
            <person name="Yin H.-F."/>
            <person name="Zhang Y."/>
            <person name="Zhu G.-F."/>
            <person name="Wan M."/>
            <person name="Huang H.-L."/>
            <person name="Qian Z."/>
            <person name="Wang S.-Y."/>
            <person name="Ma W."/>
            <person name="Yao Z.-J."/>
            <person name="Shen Y."/>
            <person name="Qiang B.-Q."/>
            <person name="Xia Q.-C."/>
            <person name="Guo X.-K."/>
            <person name="Danchin A."/>
            <person name="Saint Girons I."/>
            <person name="Somerville R.L."/>
            <person name="Wen Y.-M."/>
            <person name="Shi M.-H."/>
            <person name="Chen Z."/>
            <person name="Xu J.-G."/>
            <person name="Zhao G.-P."/>
        </authorList>
    </citation>
    <scope>NUCLEOTIDE SEQUENCE [LARGE SCALE GENOMIC DNA]</scope>
    <source>
        <strain>56601</strain>
    </source>
</reference>
<comment type="function">
    <text evidence="1">Phosphorylation of dTMP to form dTDP in both de novo and salvage pathways of dTTP synthesis.</text>
</comment>
<comment type="catalytic activity">
    <reaction evidence="1">
        <text>dTMP + ATP = dTDP + ADP</text>
        <dbReference type="Rhea" id="RHEA:13517"/>
        <dbReference type="ChEBI" id="CHEBI:30616"/>
        <dbReference type="ChEBI" id="CHEBI:58369"/>
        <dbReference type="ChEBI" id="CHEBI:63528"/>
        <dbReference type="ChEBI" id="CHEBI:456216"/>
        <dbReference type="EC" id="2.7.4.9"/>
    </reaction>
</comment>
<comment type="similarity">
    <text evidence="1">Belongs to the thymidylate kinase family.</text>
</comment>
<organism>
    <name type="scientific">Leptospira interrogans serogroup Icterohaemorrhagiae serovar Lai (strain 56601)</name>
    <dbReference type="NCBI Taxonomy" id="189518"/>
    <lineage>
        <taxon>Bacteria</taxon>
        <taxon>Pseudomonadati</taxon>
        <taxon>Spirochaetota</taxon>
        <taxon>Spirochaetia</taxon>
        <taxon>Leptospirales</taxon>
        <taxon>Leptospiraceae</taxon>
        <taxon>Leptospira</taxon>
    </lineage>
</organism>
<accession>Q8F7Y6</accession>
<keyword id="KW-0067">ATP-binding</keyword>
<keyword id="KW-0418">Kinase</keyword>
<keyword id="KW-0545">Nucleotide biosynthesis</keyword>
<keyword id="KW-0547">Nucleotide-binding</keyword>
<keyword id="KW-1185">Reference proteome</keyword>
<keyword id="KW-0808">Transferase</keyword>
<feature type="chain" id="PRO_0000155293" description="Thymidylate kinase">
    <location>
        <begin position="1"/>
        <end position="204"/>
    </location>
</feature>
<feature type="binding site" evidence="1">
    <location>
        <begin position="13"/>
        <end position="20"/>
    </location>
    <ligand>
        <name>ATP</name>
        <dbReference type="ChEBI" id="CHEBI:30616"/>
    </ligand>
</feature>
<protein>
    <recommendedName>
        <fullName evidence="1">Thymidylate kinase</fullName>
        <ecNumber evidence="1">2.7.4.9</ecNumber>
    </recommendedName>
    <alternativeName>
        <fullName evidence="1">dTMP kinase</fullName>
    </alternativeName>
</protein>
<sequence length="204" mass="23421">MKNKKPIFVVFEGIDGSGKSTLCKSLTEKLIELGIPSAAFTEPTNLETGKYLRKFLRGEIELGKEEQIEAFLNDREESLKQNILPALNSDKNVLLDRYMYSTAAYQSGDDLSPEMILKKNLNRNFKIPDLLFYLDLSPSIALERLNRRKEGKERFETLAQLEKIRSAYEKILPKDTIRIDGNKNQNQIVQECLEIFLTNIKSKS</sequence>